<name>PELO_PYRIL</name>
<sequence>MRYEVDTKRRIIKLVPEREEDLYFIYLLIDKGDIIRGWTVREYKPDGVKEGERIKIYLAIKVESLEYHKFRGSLRIRGTVVEVQDGIEGVKGRRHTFDVTPGREIEIEKAYDYPLDVVIEVLNMAKAVLPRVLLISVDDEETVFAYITALGVEILHTMYNTGRKDDSMFEEYFTAIKEVVDELKRRHKPDIVVLAGPSMIIEQASEYIQAIKVPQGSGGLAGVYEFIRGGLYEKFKIEMGINVYQRFIHKLSVDRLSVAIGLNEVREATDAGRIETVLVLDTLIKERPEDIWPLLAQVYKTRGKIHIVKEDSEVGAGLKAMGGVVALLRW</sequence>
<keyword id="KW-0963">Cytoplasm</keyword>
<keyword id="KW-0255">Endonuclease</keyword>
<keyword id="KW-0378">Hydrolase</keyword>
<keyword id="KW-0479">Metal-binding</keyword>
<keyword id="KW-0540">Nuclease</keyword>
<proteinExistence type="inferred from homology"/>
<accession>A1RRT7</accession>
<gene>
    <name evidence="1" type="primary">pelA</name>
    <name type="ordered locus">Pisl_0491</name>
</gene>
<evidence type="ECO:0000255" key="1">
    <source>
        <dbReference type="HAMAP-Rule" id="MF_01853"/>
    </source>
</evidence>
<reference key="1">
    <citation type="submission" date="2006-12" db="EMBL/GenBank/DDBJ databases">
        <title>Complete sequence of Pyrobaculum islandicum DSM 4184.</title>
        <authorList>
            <person name="Copeland A."/>
            <person name="Lucas S."/>
            <person name="Lapidus A."/>
            <person name="Barry K."/>
            <person name="Detter J.C."/>
            <person name="Glavina del Rio T."/>
            <person name="Dalin E."/>
            <person name="Tice H."/>
            <person name="Pitluck S."/>
            <person name="Meincke L."/>
            <person name="Brettin T."/>
            <person name="Bruce D."/>
            <person name="Han C."/>
            <person name="Tapia R."/>
            <person name="Gilna P."/>
            <person name="Schmutz J."/>
            <person name="Larimer F."/>
            <person name="Land M."/>
            <person name="Hauser L."/>
            <person name="Kyrpides N."/>
            <person name="Mikhailova N."/>
            <person name="Cozen A.E."/>
            <person name="Fitz-Gibbon S.T."/>
            <person name="House C.H."/>
            <person name="Saltikov C."/>
            <person name="Lowe T."/>
            <person name="Richardson P."/>
        </authorList>
    </citation>
    <scope>NUCLEOTIDE SEQUENCE [LARGE SCALE GENOMIC DNA]</scope>
    <source>
        <strain>DSM 4184 / JCM 9189 / GEO3</strain>
    </source>
</reference>
<feature type="chain" id="PRO_0000361816" description="Protein pelota homolog">
    <location>
        <begin position="1"/>
        <end position="330"/>
    </location>
</feature>
<protein>
    <recommendedName>
        <fullName evidence="1">Protein pelota homolog</fullName>
        <ecNumber evidence="1">3.1.-.-</ecNumber>
    </recommendedName>
</protein>
<organism>
    <name type="scientific">Pyrobaculum islandicum (strain DSM 4184 / JCM 9189 / GEO3)</name>
    <dbReference type="NCBI Taxonomy" id="384616"/>
    <lineage>
        <taxon>Archaea</taxon>
        <taxon>Thermoproteota</taxon>
        <taxon>Thermoprotei</taxon>
        <taxon>Thermoproteales</taxon>
        <taxon>Thermoproteaceae</taxon>
        <taxon>Pyrobaculum</taxon>
    </lineage>
</organism>
<dbReference type="EC" id="3.1.-.-" evidence="1"/>
<dbReference type="EMBL" id="CP000504">
    <property type="protein sequence ID" value="ABL87669.1"/>
    <property type="molecule type" value="Genomic_DNA"/>
</dbReference>
<dbReference type="RefSeq" id="WP_011762246.1">
    <property type="nucleotide sequence ID" value="NC_008701.1"/>
</dbReference>
<dbReference type="SMR" id="A1RRT7"/>
<dbReference type="STRING" id="384616.Pisl_0491"/>
<dbReference type="GeneID" id="4617979"/>
<dbReference type="KEGG" id="pis:Pisl_0491"/>
<dbReference type="eggNOG" id="arCOG01741">
    <property type="taxonomic scope" value="Archaea"/>
</dbReference>
<dbReference type="HOGENOM" id="CLU_023334_0_0_2"/>
<dbReference type="OrthoDB" id="31300at2157"/>
<dbReference type="Proteomes" id="UP000002595">
    <property type="component" value="Chromosome"/>
</dbReference>
<dbReference type="GO" id="GO:0005737">
    <property type="term" value="C:cytoplasm"/>
    <property type="evidence" value="ECO:0007669"/>
    <property type="project" value="UniProtKB-SubCell"/>
</dbReference>
<dbReference type="GO" id="GO:0004519">
    <property type="term" value="F:endonuclease activity"/>
    <property type="evidence" value="ECO:0007669"/>
    <property type="project" value="UniProtKB-UniRule"/>
</dbReference>
<dbReference type="GO" id="GO:0046872">
    <property type="term" value="F:metal ion binding"/>
    <property type="evidence" value="ECO:0007669"/>
    <property type="project" value="UniProtKB-UniRule"/>
</dbReference>
<dbReference type="GO" id="GO:0070651">
    <property type="term" value="P:nonfunctional rRNA decay"/>
    <property type="evidence" value="ECO:0007669"/>
    <property type="project" value="TreeGrafter"/>
</dbReference>
<dbReference type="GO" id="GO:0070966">
    <property type="term" value="P:nuclear-transcribed mRNA catabolic process, no-go decay"/>
    <property type="evidence" value="ECO:0007669"/>
    <property type="project" value="InterPro"/>
</dbReference>
<dbReference type="GO" id="GO:0070481">
    <property type="term" value="P:nuclear-transcribed mRNA catabolic process, non-stop decay"/>
    <property type="evidence" value="ECO:0007669"/>
    <property type="project" value="InterPro"/>
</dbReference>
<dbReference type="GO" id="GO:0032790">
    <property type="term" value="P:ribosome disassembly"/>
    <property type="evidence" value="ECO:0007669"/>
    <property type="project" value="TreeGrafter"/>
</dbReference>
<dbReference type="GO" id="GO:0071025">
    <property type="term" value="P:RNA surveillance"/>
    <property type="evidence" value="ECO:0007669"/>
    <property type="project" value="InterPro"/>
</dbReference>
<dbReference type="Gene3D" id="3.30.1330.30">
    <property type="match status" value="1"/>
</dbReference>
<dbReference type="Gene3D" id="3.30.420.60">
    <property type="entry name" value="eRF1 domain 2"/>
    <property type="match status" value="1"/>
</dbReference>
<dbReference type="Gene3D" id="2.30.30.870">
    <property type="entry name" value="Pelota, domain A"/>
    <property type="match status" value="1"/>
</dbReference>
<dbReference type="HAMAP" id="MF_01853">
    <property type="entry name" value="PelO"/>
    <property type="match status" value="1"/>
</dbReference>
<dbReference type="InterPro" id="IPR042226">
    <property type="entry name" value="eFR1_2_sf"/>
</dbReference>
<dbReference type="InterPro" id="IPR005140">
    <property type="entry name" value="eRF1_1_Pelota"/>
</dbReference>
<dbReference type="InterPro" id="IPR005142">
    <property type="entry name" value="eRF1_3"/>
</dbReference>
<dbReference type="InterPro" id="IPR038069">
    <property type="entry name" value="Pelota/DOM34_N"/>
</dbReference>
<dbReference type="InterPro" id="IPR023521">
    <property type="entry name" value="Pelota_arc"/>
</dbReference>
<dbReference type="InterPro" id="IPR029064">
    <property type="entry name" value="Ribosomal_eL30-like_sf"/>
</dbReference>
<dbReference type="InterPro" id="IPR004405">
    <property type="entry name" value="Transl-rel_pelota"/>
</dbReference>
<dbReference type="PANTHER" id="PTHR10853">
    <property type="entry name" value="PELOTA"/>
    <property type="match status" value="1"/>
</dbReference>
<dbReference type="PANTHER" id="PTHR10853:SF0">
    <property type="entry name" value="PROTEIN PELOTA HOMOLOG"/>
    <property type="match status" value="1"/>
</dbReference>
<dbReference type="Pfam" id="PF03463">
    <property type="entry name" value="eRF1_1"/>
    <property type="match status" value="1"/>
</dbReference>
<dbReference type="Pfam" id="PF03465">
    <property type="entry name" value="eRF1_3"/>
    <property type="match status" value="1"/>
</dbReference>
<dbReference type="SMART" id="SM01194">
    <property type="entry name" value="eRF1_1"/>
    <property type="match status" value="1"/>
</dbReference>
<dbReference type="SUPFAM" id="SSF159065">
    <property type="entry name" value="Dom34/Pelota N-terminal domain-like"/>
    <property type="match status" value="1"/>
</dbReference>
<dbReference type="SUPFAM" id="SSF55315">
    <property type="entry name" value="L30e-like"/>
    <property type="match status" value="1"/>
</dbReference>
<dbReference type="SUPFAM" id="SSF53137">
    <property type="entry name" value="Translational machinery components"/>
    <property type="match status" value="1"/>
</dbReference>
<comment type="function">
    <text evidence="1">May function in recognizing stalled ribosomes, interact with stem-loop structures in stalled mRNA molecules, and effect endonucleolytic cleavage of the mRNA. May play a role in the release non-functional ribosomes and degradation of damaged mRNAs. Has endoribonuclease activity.</text>
</comment>
<comment type="cofactor">
    <cofactor evidence="1">
        <name>a divalent metal cation</name>
        <dbReference type="ChEBI" id="CHEBI:60240"/>
    </cofactor>
</comment>
<comment type="subunit">
    <text evidence="1">Monomer.</text>
</comment>
<comment type="subcellular location">
    <subcellularLocation>
        <location evidence="1">Cytoplasm</location>
    </subcellularLocation>
</comment>
<comment type="domain">
    <text evidence="1">The N-terminal domain has the RNA-binding Sm fold. It harbors the endoribonuclease activity.</text>
</comment>
<comment type="similarity">
    <text evidence="1">Belongs to the eukaryotic release factor 1 family. Pelota subfamily.</text>
</comment>